<gene>
    <name type="primary">UBE2T</name>
    <name type="ORF">HSPC150</name>
    <name type="ORF">PIG50</name>
</gene>
<sequence length="197" mass="22521">MQRASRLKRELHMLATEPPPGITCWQDKDQMDDLRAQILGGANTPYEKGVFKLEVIIPERYPFEPPQIRFLTPIYHPNIDSAGRICLDVLKLPPKGAWRPSLNIATVLTSIQLLMSEPNPDDPLMADISSEFKYNKPAFLKNARQWTEKHARQKQKADEEEMLDNLPEAGDSRVHNSTQKRKASQLVGIEKKFHPDV</sequence>
<reference key="1">
    <citation type="submission" date="1999-10" db="EMBL/GenBank/DDBJ databases">
        <title>Ubiquitin-conjugating enzyme isolog.</title>
        <authorList>
            <person name="Okaze H."/>
            <person name="Hayashi A."/>
            <person name="Kozuma S."/>
            <person name="Saito T."/>
        </authorList>
    </citation>
    <scope>NUCLEOTIDE SEQUENCE [MRNA]</scope>
</reference>
<reference key="2">
    <citation type="journal article" date="2000" name="Proc. Natl. Acad. Sci. U.S.A.">
        <title>Gene expression profiling in the human hypothalamus-pituitary-adrenal axis and full-length cDNA cloning.</title>
        <authorList>
            <person name="Hu R.-M."/>
            <person name="Han Z.-G."/>
            <person name="Song H.-D."/>
            <person name="Peng Y.-D."/>
            <person name="Huang Q.-H."/>
            <person name="Ren S.-X."/>
            <person name="Gu Y.-J."/>
            <person name="Huang C.-H."/>
            <person name="Li Y.-B."/>
            <person name="Jiang C.-L."/>
            <person name="Fu G."/>
            <person name="Zhang Q.-H."/>
            <person name="Gu B.-W."/>
            <person name="Dai M."/>
            <person name="Mao Y.-F."/>
            <person name="Gao G.-F."/>
            <person name="Rong R."/>
            <person name="Ye M."/>
            <person name="Zhou J."/>
            <person name="Xu S.-H."/>
            <person name="Gu J."/>
            <person name="Shi J.-X."/>
            <person name="Jin W.-R."/>
            <person name="Zhang C.-K."/>
            <person name="Wu T.-M."/>
            <person name="Huang G.-Y."/>
            <person name="Chen Z."/>
            <person name="Chen M.-D."/>
            <person name="Chen J.-L."/>
        </authorList>
    </citation>
    <scope>NUCLEOTIDE SEQUENCE [LARGE SCALE MRNA]</scope>
    <source>
        <tissue>Adrenal gland</tissue>
    </source>
</reference>
<reference key="3">
    <citation type="journal article" date="2000" name="Genome Res.">
        <title>Cloning and functional analysis of cDNAs with open reading frames for 300 previously undefined genes expressed in CD34+ hematopoietic stem/progenitor cells.</title>
        <authorList>
            <person name="Zhang Q.-H."/>
            <person name="Ye M."/>
            <person name="Wu X.-Y."/>
            <person name="Ren S.-X."/>
            <person name="Zhao M."/>
            <person name="Zhao C.-J."/>
            <person name="Fu G."/>
            <person name="Shen Y."/>
            <person name="Fan H.-Y."/>
            <person name="Lu G."/>
            <person name="Zhong M."/>
            <person name="Xu X.-R."/>
            <person name="Han Z.-G."/>
            <person name="Zhang J.-W."/>
            <person name="Tao J."/>
            <person name="Huang Q.-H."/>
            <person name="Zhou J."/>
            <person name="Hu G.-X."/>
            <person name="Gu J."/>
            <person name="Chen S.-J."/>
            <person name="Chen Z."/>
        </authorList>
    </citation>
    <scope>NUCLEOTIDE SEQUENCE [LARGE SCALE MRNA]</scope>
    <source>
        <tissue>Blood</tissue>
    </source>
</reference>
<reference key="4">
    <citation type="journal article" date="2004" name="Nat. Genet.">
        <title>Complete sequencing and characterization of 21,243 full-length human cDNAs.</title>
        <authorList>
            <person name="Ota T."/>
            <person name="Suzuki Y."/>
            <person name="Nishikawa T."/>
            <person name="Otsuki T."/>
            <person name="Sugiyama T."/>
            <person name="Irie R."/>
            <person name="Wakamatsu A."/>
            <person name="Hayashi K."/>
            <person name="Sato H."/>
            <person name="Nagai K."/>
            <person name="Kimura K."/>
            <person name="Makita H."/>
            <person name="Sekine M."/>
            <person name="Obayashi M."/>
            <person name="Nishi T."/>
            <person name="Shibahara T."/>
            <person name="Tanaka T."/>
            <person name="Ishii S."/>
            <person name="Yamamoto J."/>
            <person name="Saito K."/>
            <person name="Kawai Y."/>
            <person name="Isono Y."/>
            <person name="Nakamura Y."/>
            <person name="Nagahari K."/>
            <person name="Murakami K."/>
            <person name="Yasuda T."/>
            <person name="Iwayanagi T."/>
            <person name="Wagatsuma M."/>
            <person name="Shiratori A."/>
            <person name="Sudo H."/>
            <person name="Hosoiri T."/>
            <person name="Kaku Y."/>
            <person name="Kodaira H."/>
            <person name="Kondo H."/>
            <person name="Sugawara M."/>
            <person name="Takahashi M."/>
            <person name="Kanda K."/>
            <person name="Yokoi T."/>
            <person name="Furuya T."/>
            <person name="Kikkawa E."/>
            <person name="Omura Y."/>
            <person name="Abe K."/>
            <person name="Kamihara K."/>
            <person name="Katsuta N."/>
            <person name="Sato K."/>
            <person name="Tanikawa M."/>
            <person name="Yamazaki M."/>
            <person name="Ninomiya K."/>
            <person name="Ishibashi T."/>
            <person name="Yamashita H."/>
            <person name="Murakawa K."/>
            <person name="Fujimori K."/>
            <person name="Tanai H."/>
            <person name="Kimata M."/>
            <person name="Watanabe M."/>
            <person name="Hiraoka S."/>
            <person name="Chiba Y."/>
            <person name="Ishida S."/>
            <person name="Ono Y."/>
            <person name="Takiguchi S."/>
            <person name="Watanabe S."/>
            <person name="Yosida M."/>
            <person name="Hotuta T."/>
            <person name="Kusano J."/>
            <person name="Kanehori K."/>
            <person name="Takahashi-Fujii A."/>
            <person name="Hara H."/>
            <person name="Tanase T.-O."/>
            <person name="Nomura Y."/>
            <person name="Togiya S."/>
            <person name="Komai F."/>
            <person name="Hara R."/>
            <person name="Takeuchi K."/>
            <person name="Arita M."/>
            <person name="Imose N."/>
            <person name="Musashino K."/>
            <person name="Yuuki H."/>
            <person name="Oshima A."/>
            <person name="Sasaki N."/>
            <person name="Aotsuka S."/>
            <person name="Yoshikawa Y."/>
            <person name="Matsunawa H."/>
            <person name="Ichihara T."/>
            <person name="Shiohata N."/>
            <person name="Sano S."/>
            <person name="Moriya S."/>
            <person name="Momiyama H."/>
            <person name="Satoh N."/>
            <person name="Takami S."/>
            <person name="Terashima Y."/>
            <person name="Suzuki O."/>
            <person name="Nakagawa S."/>
            <person name="Senoh A."/>
            <person name="Mizoguchi H."/>
            <person name="Goto Y."/>
            <person name="Shimizu F."/>
            <person name="Wakebe H."/>
            <person name="Hishigaki H."/>
            <person name="Watanabe T."/>
            <person name="Sugiyama A."/>
            <person name="Takemoto M."/>
            <person name="Kawakami B."/>
            <person name="Yamazaki M."/>
            <person name="Watanabe K."/>
            <person name="Kumagai A."/>
            <person name="Itakura S."/>
            <person name="Fukuzumi Y."/>
            <person name="Fujimori Y."/>
            <person name="Komiyama M."/>
            <person name="Tashiro H."/>
            <person name="Tanigami A."/>
            <person name="Fujiwara T."/>
            <person name="Ono T."/>
            <person name="Yamada K."/>
            <person name="Fujii Y."/>
            <person name="Ozaki K."/>
            <person name="Hirao M."/>
            <person name="Ohmori Y."/>
            <person name="Kawabata A."/>
            <person name="Hikiji T."/>
            <person name="Kobatake N."/>
            <person name="Inagaki H."/>
            <person name="Ikema Y."/>
            <person name="Okamoto S."/>
            <person name="Okitani R."/>
            <person name="Kawakami T."/>
            <person name="Noguchi S."/>
            <person name="Itoh T."/>
            <person name="Shigeta K."/>
            <person name="Senba T."/>
            <person name="Matsumura K."/>
            <person name="Nakajima Y."/>
            <person name="Mizuno T."/>
            <person name="Morinaga M."/>
            <person name="Sasaki M."/>
            <person name="Togashi T."/>
            <person name="Oyama M."/>
            <person name="Hata H."/>
            <person name="Watanabe M."/>
            <person name="Komatsu T."/>
            <person name="Mizushima-Sugano J."/>
            <person name="Satoh T."/>
            <person name="Shirai Y."/>
            <person name="Takahashi Y."/>
            <person name="Nakagawa K."/>
            <person name="Okumura K."/>
            <person name="Nagase T."/>
            <person name="Nomura N."/>
            <person name="Kikuchi H."/>
            <person name="Masuho Y."/>
            <person name="Yamashita R."/>
            <person name="Nakai K."/>
            <person name="Yada T."/>
            <person name="Nakamura Y."/>
            <person name="Ohara O."/>
            <person name="Isogai T."/>
            <person name="Sugano S."/>
        </authorList>
    </citation>
    <scope>NUCLEOTIDE SEQUENCE [LARGE SCALE MRNA]</scope>
    <source>
        <tissue>Carcinoma</tissue>
    </source>
</reference>
<reference key="5">
    <citation type="submission" date="2004-02" db="EMBL/GenBank/DDBJ databases">
        <title>Identification of a human cell proliferation inducing gene.</title>
        <authorList>
            <person name="Kim J.W."/>
        </authorList>
    </citation>
    <scope>NUCLEOTIDE SEQUENCE [LARGE SCALE MRNA]</scope>
</reference>
<reference key="6">
    <citation type="journal article" date="2006" name="Nature">
        <title>The DNA sequence and biological annotation of human chromosome 1.</title>
        <authorList>
            <person name="Gregory S.G."/>
            <person name="Barlow K.F."/>
            <person name="McLay K.E."/>
            <person name="Kaul R."/>
            <person name="Swarbreck D."/>
            <person name="Dunham A."/>
            <person name="Scott C.E."/>
            <person name="Howe K.L."/>
            <person name="Woodfine K."/>
            <person name="Spencer C.C.A."/>
            <person name="Jones M.C."/>
            <person name="Gillson C."/>
            <person name="Searle S."/>
            <person name="Zhou Y."/>
            <person name="Kokocinski F."/>
            <person name="McDonald L."/>
            <person name="Evans R."/>
            <person name="Phillips K."/>
            <person name="Atkinson A."/>
            <person name="Cooper R."/>
            <person name="Jones C."/>
            <person name="Hall R.E."/>
            <person name="Andrews T.D."/>
            <person name="Lloyd C."/>
            <person name="Ainscough R."/>
            <person name="Almeida J.P."/>
            <person name="Ambrose K.D."/>
            <person name="Anderson F."/>
            <person name="Andrew R.W."/>
            <person name="Ashwell R.I.S."/>
            <person name="Aubin K."/>
            <person name="Babbage A.K."/>
            <person name="Bagguley C.L."/>
            <person name="Bailey J."/>
            <person name="Beasley H."/>
            <person name="Bethel G."/>
            <person name="Bird C.P."/>
            <person name="Bray-Allen S."/>
            <person name="Brown J.Y."/>
            <person name="Brown A.J."/>
            <person name="Buckley D."/>
            <person name="Burton J."/>
            <person name="Bye J."/>
            <person name="Carder C."/>
            <person name="Chapman J.C."/>
            <person name="Clark S.Y."/>
            <person name="Clarke G."/>
            <person name="Clee C."/>
            <person name="Cobley V."/>
            <person name="Collier R.E."/>
            <person name="Corby N."/>
            <person name="Coville G.J."/>
            <person name="Davies J."/>
            <person name="Deadman R."/>
            <person name="Dunn M."/>
            <person name="Earthrowl M."/>
            <person name="Ellington A.G."/>
            <person name="Errington H."/>
            <person name="Frankish A."/>
            <person name="Frankland J."/>
            <person name="French L."/>
            <person name="Garner P."/>
            <person name="Garnett J."/>
            <person name="Gay L."/>
            <person name="Ghori M.R.J."/>
            <person name="Gibson R."/>
            <person name="Gilby L.M."/>
            <person name="Gillett W."/>
            <person name="Glithero R.J."/>
            <person name="Grafham D.V."/>
            <person name="Griffiths C."/>
            <person name="Griffiths-Jones S."/>
            <person name="Grocock R."/>
            <person name="Hammond S."/>
            <person name="Harrison E.S.I."/>
            <person name="Hart E."/>
            <person name="Haugen E."/>
            <person name="Heath P.D."/>
            <person name="Holmes S."/>
            <person name="Holt K."/>
            <person name="Howden P.J."/>
            <person name="Hunt A.R."/>
            <person name="Hunt S.E."/>
            <person name="Hunter G."/>
            <person name="Isherwood J."/>
            <person name="James R."/>
            <person name="Johnson C."/>
            <person name="Johnson D."/>
            <person name="Joy A."/>
            <person name="Kay M."/>
            <person name="Kershaw J.K."/>
            <person name="Kibukawa M."/>
            <person name="Kimberley A.M."/>
            <person name="King A."/>
            <person name="Knights A.J."/>
            <person name="Lad H."/>
            <person name="Laird G."/>
            <person name="Lawlor S."/>
            <person name="Leongamornlert D.A."/>
            <person name="Lloyd D.M."/>
            <person name="Loveland J."/>
            <person name="Lovell J."/>
            <person name="Lush M.J."/>
            <person name="Lyne R."/>
            <person name="Martin S."/>
            <person name="Mashreghi-Mohammadi M."/>
            <person name="Matthews L."/>
            <person name="Matthews N.S.W."/>
            <person name="McLaren S."/>
            <person name="Milne S."/>
            <person name="Mistry S."/>
            <person name="Moore M.J.F."/>
            <person name="Nickerson T."/>
            <person name="O'Dell C.N."/>
            <person name="Oliver K."/>
            <person name="Palmeiri A."/>
            <person name="Palmer S.A."/>
            <person name="Parker A."/>
            <person name="Patel D."/>
            <person name="Pearce A.V."/>
            <person name="Peck A.I."/>
            <person name="Pelan S."/>
            <person name="Phelps K."/>
            <person name="Phillimore B.J."/>
            <person name="Plumb R."/>
            <person name="Rajan J."/>
            <person name="Raymond C."/>
            <person name="Rouse G."/>
            <person name="Saenphimmachak C."/>
            <person name="Sehra H.K."/>
            <person name="Sheridan E."/>
            <person name="Shownkeen R."/>
            <person name="Sims S."/>
            <person name="Skuce C.D."/>
            <person name="Smith M."/>
            <person name="Steward C."/>
            <person name="Subramanian S."/>
            <person name="Sycamore N."/>
            <person name="Tracey A."/>
            <person name="Tromans A."/>
            <person name="Van Helmond Z."/>
            <person name="Wall M."/>
            <person name="Wallis J.M."/>
            <person name="White S."/>
            <person name="Whitehead S.L."/>
            <person name="Wilkinson J.E."/>
            <person name="Willey D.L."/>
            <person name="Williams H."/>
            <person name="Wilming L."/>
            <person name="Wray P.W."/>
            <person name="Wu Z."/>
            <person name="Coulson A."/>
            <person name="Vaudin M."/>
            <person name="Sulston J.E."/>
            <person name="Durbin R.M."/>
            <person name="Hubbard T."/>
            <person name="Wooster R."/>
            <person name="Dunham I."/>
            <person name="Carter N.P."/>
            <person name="McVean G."/>
            <person name="Ross M.T."/>
            <person name="Harrow J."/>
            <person name="Olson M.V."/>
            <person name="Beck S."/>
            <person name="Rogers J."/>
            <person name="Bentley D.R."/>
        </authorList>
    </citation>
    <scope>NUCLEOTIDE SEQUENCE [LARGE SCALE GENOMIC DNA]</scope>
</reference>
<reference key="7">
    <citation type="submission" date="2005-07" db="EMBL/GenBank/DDBJ databases">
        <authorList>
            <person name="Mural R.J."/>
            <person name="Istrail S."/>
            <person name="Sutton G.G."/>
            <person name="Florea L."/>
            <person name="Halpern A.L."/>
            <person name="Mobarry C.M."/>
            <person name="Lippert R."/>
            <person name="Walenz B."/>
            <person name="Shatkay H."/>
            <person name="Dew I."/>
            <person name="Miller J.R."/>
            <person name="Flanigan M.J."/>
            <person name="Edwards N.J."/>
            <person name="Bolanos R."/>
            <person name="Fasulo D."/>
            <person name="Halldorsson B.V."/>
            <person name="Hannenhalli S."/>
            <person name="Turner R."/>
            <person name="Yooseph S."/>
            <person name="Lu F."/>
            <person name="Nusskern D.R."/>
            <person name="Shue B.C."/>
            <person name="Zheng X.H."/>
            <person name="Zhong F."/>
            <person name="Delcher A.L."/>
            <person name="Huson D.H."/>
            <person name="Kravitz S.A."/>
            <person name="Mouchard L."/>
            <person name="Reinert K."/>
            <person name="Remington K.A."/>
            <person name="Clark A.G."/>
            <person name="Waterman M.S."/>
            <person name="Eichler E.E."/>
            <person name="Adams M.D."/>
            <person name="Hunkapiller M.W."/>
            <person name="Myers E.W."/>
            <person name="Venter J.C."/>
        </authorList>
    </citation>
    <scope>NUCLEOTIDE SEQUENCE [LARGE SCALE GENOMIC DNA]</scope>
</reference>
<reference key="8">
    <citation type="journal article" date="2004" name="Genome Res.">
        <title>The status, quality, and expansion of the NIH full-length cDNA project: the Mammalian Gene Collection (MGC).</title>
        <authorList>
            <consortium name="The MGC Project Team"/>
        </authorList>
    </citation>
    <scope>NUCLEOTIDE SEQUENCE [LARGE SCALE MRNA]</scope>
    <source>
        <tissue>Lung</tissue>
    </source>
</reference>
<reference key="9">
    <citation type="journal article" date="2006" name="Mol. Cell">
        <title>UBE2T is the E2 in the Fanconi anemia pathway and undergoes negative autoregulation.</title>
        <authorList>
            <person name="Machida Y.J."/>
            <person name="Machida Y."/>
            <person name="Chen Y."/>
            <person name="Gurtan A.M."/>
            <person name="Kupfer G.M."/>
            <person name="D'Andrea A.D."/>
            <person name="Dutta A."/>
        </authorList>
    </citation>
    <scope>FUNCTION</scope>
    <scope>INTERACTION WITH FANCL</scope>
    <scope>UBIQUITINATION AT LYS-91</scope>
    <scope>MUTAGENESIS OF CYS-86</scope>
</reference>
<reference key="10">
    <citation type="journal article" date="2007" name="Mol. Cell. Biol.">
        <title>UBE2T, the Fanconi anemia core complex, and FANCD2 are recruited independently to chromatin: a basis for the regulation of FANCD2 monoubiquitination.</title>
        <authorList>
            <person name="Alpi A."/>
            <person name="Langevin F."/>
            <person name="Mosedale G."/>
            <person name="Machida Y.J."/>
            <person name="Dutta A."/>
            <person name="Patel K.J."/>
        </authorList>
    </citation>
    <scope>FUNCTION</scope>
    <scope>SUBCELLULAR LOCATION</scope>
    <scope>INTERACTION WITH FANCL</scope>
    <scope>MUTAGENESIS OF CYS-86</scope>
</reference>
<reference key="11">
    <citation type="journal article" date="2008" name="Mol. Cell">
        <title>Mechanistic insight into site-restricted monoubiquitination of FANCD2 by Ube2t, FANCL, and FANCI.</title>
        <authorList>
            <person name="Alpi A.F."/>
            <person name="Pace P.E."/>
            <person name="Babu M.M."/>
            <person name="Patel K.J."/>
        </authorList>
    </citation>
    <scope>FUNCTION</scope>
    <scope>INTERACTION WITH FANCL</scope>
    <scope>UBIQUITINATION AT LYS-91 AND LYS-182</scope>
    <scope>MUTAGENESIS OF CYS-86; LYS-91 AND 182-LYS--LYS-191</scope>
</reference>
<reference key="12">
    <citation type="journal article" date="2008" name="Proc. Natl. Acad. Sci. U.S.A.">
        <title>A quantitative atlas of mitotic phosphorylation.</title>
        <authorList>
            <person name="Dephoure N."/>
            <person name="Zhou C."/>
            <person name="Villen J."/>
            <person name="Beausoleil S.A."/>
            <person name="Bakalarski C.E."/>
            <person name="Elledge S.J."/>
            <person name="Gygi S.P."/>
        </authorList>
    </citation>
    <scope>IDENTIFICATION BY MASS SPECTROMETRY [LARGE SCALE ANALYSIS]</scope>
    <source>
        <tissue>Cervix carcinoma</tissue>
    </source>
</reference>
<reference key="13">
    <citation type="journal article" date="2009" name="Cancer Res.">
        <title>Ubiquitination and downregulation of BRCA1 by ubiquitin-conjugating enzyme E2T overexpression in human breast cancer cells.</title>
        <authorList>
            <person name="Ueki T."/>
            <person name="Park J.H."/>
            <person name="Nishidate T."/>
            <person name="Kijima K."/>
            <person name="Hirata K."/>
            <person name="Nakamura Y."/>
            <person name="Katagiri T."/>
        </authorList>
    </citation>
    <scope>FUNCTION</scope>
    <scope>SUBCELLULAR LOCATION</scope>
    <scope>MUTAGENESIS OF CYS-86</scope>
    <scope>INTERACTION WITH BRCA1</scope>
</reference>
<reference key="14">
    <citation type="journal article" date="2009" name="J. Biol. Chem.">
        <title>FANCI binds branched DNA and is monoubiquitinated by UBE2T-FANCL.</title>
        <authorList>
            <person name="Longerich S."/>
            <person name="San Filippo J."/>
            <person name="Liu D."/>
            <person name="Sung P."/>
        </authorList>
    </citation>
    <scope>FUNCTION</scope>
    <scope>MUTAGENESIS OF CYS-86</scope>
</reference>
<reference key="15">
    <citation type="journal article" date="2010" name="J. Biol. Chem.">
        <title>The E2 ubiquitin-conjugating enzymes direct polyubiquitination to preferred lysines.</title>
        <authorList>
            <person name="David Y."/>
            <person name="Ziv T."/>
            <person name="Admon A."/>
            <person name="Navon A."/>
        </authorList>
    </citation>
    <scope>FUNCTION</scope>
    <scope>CATALYTIC ACTIVITY</scope>
    <scope>AUTOUBIQUITINATION</scope>
</reference>
<reference key="16">
    <citation type="journal article" date="2011" name="BMC Syst. Biol.">
        <title>Initial characterization of the human central proteome.</title>
        <authorList>
            <person name="Burkard T.R."/>
            <person name="Planyavsky M."/>
            <person name="Kaupe I."/>
            <person name="Breitwieser F.P."/>
            <person name="Buerckstuemmer T."/>
            <person name="Bennett K.L."/>
            <person name="Superti-Furga G."/>
            <person name="Colinge J."/>
        </authorList>
    </citation>
    <scope>IDENTIFICATION BY MASS SPECTROMETRY [LARGE SCALE ANALYSIS]</scope>
</reference>
<reference key="17">
    <citation type="journal article" date="2011" name="J. Biol. Chem.">
        <title>Structural analysis of human FANCL, the E3 ligase in the Fanconi anemia pathway.</title>
        <authorList>
            <person name="Hodson C."/>
            <person name="Cole A.R."/>
            <person name="Lewis L.P."/>
            <person name="Miles J.A."/>
            <person name="Purkiss A."/>
            <person name="Walden H."/>
        </authorList>
    </citation>
    <scope>INTERACTION WITH FANCL</scope>
    <scope>MUTAGENESIS OF PHE-63</scope>
</reference>
<reference key="18">
    <citation type="journal article" date="2011" name="Radiother. Oncol.">
        <title>Hypoxia disrupts the Fanconi anemia pathway and sensitizes cells to chemotherapy through regulation of UBE2T.</title>
        <authorList>
            <person name="Ramaekers C.H."/>
            <person name="van den Beucken T."/>
            <person name="Meng A."/>
            <person name="Kassam S."/>
            <person name="Thoms J."/>
            <person name="Bristow R.G."/>
            <person name="Wouters B.G."/>
        </authorList>
    </citation>
    <scope>INDUCTION</scope>
</reference>
<reference key="19">
    <citation type="journal article" date="2013" name="J. Proteome Res.">
        <title>Toward a comprehensive characterization of a human cancer cell phosphoproteome.</title>
        <authorList>
            <person name="Zhou H."/>
            <person name="Di Palma S."/>
            <person name="Preisinger C."/>
            <person name="Peng M."/>
            <person name="Polat A.N."/>
            <person name="Heck A.J."/>
            <person name="Mohammed S."/>
        </authorList>
    </citation>
    <scope>PHOSPHORYLATION [LARGE SCALE ANALYSIS] AT SER-184</scope>
    <scope>IDENTIFICATION BY MASS SPECTROMETRY [LARGE SCALE ANALYSIS]</scope>
    <source>
        <tissue>Cervix carcinoma</tissue>
    </source>
</reference>
<reference key="20">
    <citation type="journal article" date="2015" name="Am. J. Hum. Genet.">
        <title>Mutations in the gene encoding the E2 conjugating enzyme UBE2T cause Fanconi anemia.</title>
        <authorList>
            <person name="Hira A."/>
            <person name="Yoshida K."/>
            <person name="Sato K."/>
            <person name="Okuno Y."/>
            <person name="Shiraishi Y."/>
            <person name="Chiba K."/>
            <person name="Tanaka H."/>
            <person name="Miyano S."/>
            <person name="Shimamoto A."/>
            <person name="Tahara H."/>
            <person name="Ito E."/>
            <person name="Kojima S."/>
            <person name="Kurumizaka H."/>
            <person name="Ogawa S."/>
            <person name="Takata M."/>
            <person name="Yabe H."/>
            <person name="Yabe M."/>
        </authorList>
    </citation>
    <scope>INVOLVEMENT IN FANCT</scope>
    <scope>VARIANT FANCT GLU-2</scope>
    <scope>CHARACTERIZATION OF VARIANT FANCT GLU-2</scope>
</reference>
<reference key="21">
    <citation type="journal article" date="2017" name="Nat. Struct. Mol. Biol.">
        <title>Site-specific mapping of the human SUMO proteome reveals co-modification with phosphorylation.</title>
        <authorList>
            <person name="Hendriks I.A."/>
            <person name="Lyon D."/>
            <person name="Young C."/>
            <person name="Jensen L.J."/>
            <person name="Vertegaal A.C."/>
            <person name="Nielsen M.L."/>
        </authorList>
    </citation>
    <scope>SUMOYLATION [LARGE SCALE ANALYSIS] AT LYS-191 AND LYS-192</scope>
    <scope>IDENTIFICATION BY MASS SPECTROMETRY [LARGE SCALE ANALYSIS]</scope>
</reference>
<reference key="22">
    <citation type="submission" date="2005-02" db="PDB data bank">
        <title>Ubiquitin-conjugating enzyme HSPC150.</title>
        <authorList>
            <person name="Walker J.R."/>
            <person name="Avvakumov G.V."/>
            <person name="Newman E.M."/>
            <person name="Mackenzie F."/>
            <person name="Kozieradzki I."/>
            <person name="Sundstrom M."/>
            <person name="Arrowsmith C."/>
            <person name="Edwards A."/>
            <person name="Bochkarev A."/>
            <person name="Dhe-Paganon S."/>
        </authorList>
    </citation>
    <scope>X-RAY CRYSTALLOGRAPHY (2.0 ANGSTROMS) OF 1-167</scope>
</reference>
<reference evidence="16" key="23">
    <citation type="journal article" date="2012" name="Mol. Cell. Proteomics">
        <title>A human ubiquitin conjugating enzyme (E2)-HECT E3 ligase structure-function screen.</title>
        <authorList>
            <person name="Sheng Y."/>
            <person name="Hong J.H."/>
            <person name="Doherty R."/>
            <person name="Srikumar T."/>
            <person name="Shloush J."/>
            <person name="Avvakumov G.V."/>
            <person name="Walker J.R."/>
            <person name="Xue S."/>
            <person name="Neculai D."/>
            <person name="Wan J.W."/>
            <person name="Kim S.K."/>
            <person name="Arrowsmith C.H."/>
            <person name="Raught B."/>
            <person name="Dhe-Paganon S."/>
        </authorList>
    </citation>
    <scope>X-RAY CRYSTALLOGRAPHY (2.00 ANGSTROMS) OF 1-167</scope>
    <scope>AUTOUBIQUITINATION</scope>
</reference>
<reference evidence="17" key="24">
    <citation type="journal article" date="2014" name="Structure">
        <title>Structure of the human FANCL RING-Ube2T complex reveals determinants of cognate E3-E2 selection.</title>
        <authorList>
            <person name="Hodson C."/>
            <person name="Purkiss A."/>
            <person name="Miles J.A."/>
            <person name="Walden H."/>
        </authorList>
    </citation>
    <scope>X-RAY CRYSTALLOGRAPHY (2.40 ANGSTROMS)</scope>
    <scope>INTERACTION WITH FANCL</scope>
    <scope>MUTAGENESIS OF SER-5; ARG-60 AND 99-ARG--SER-101</scope>
</reference>
<reference evidence="18" key="25">
    <citation type="journal article" date="2017" name="J. Med. Chem.">
        <title>Allosteric targeting of the Fanconi anemia ubiquitin-conjugating enzyme Ube2T by fragment screening.</title>
        <authorList>
            <person name="Morreale F.E."/>
            <person name="Bortoluzzi A."/>
            <person name="Chaugule V.K."/>
            <person name="Arkinson C."/>
            <person name="Walden H."/>
            <person name="Ciulli A."/>
        </authorList>
    </citation>
    <scope>X-RAY CRYSTALLOGRAPHY (2.40 ANGSTROMS) IN COMPLEX WITH INHIBITOR 1-(1,3-BENZOTHIAZOL-2-YL)METHANAMINE</scope>
    <scope>FUNCTION</scope>
    <scope>MUTAGENESIS OF PRO-73</scope>
</reference>
<protein>
    <recommendedName>
        <fullName>Ubiquitin-conjugating enzyme E2 T</fullName>
        <ecNumber evidence="9">2.3.2.23</ecNumber>
    </recommendedName>
    <alternativeName>
        <fullName>Cell proliferation-inducing gene 50 protein</fullName>
    </alternativeName>
    <alternativeName>
        <fullName>E2 ubiquitin-conjugating enzyme T</fullName>
    </alternativeName>
    <alternativeName>
        <fullName>Ubiquitin carrier protein T</fullName>
    </alternativeName>
    <alternativeName>
        <fullName>Ubiquitin-protein ligase T</fullName>
    </alternativeName>
</protein>
<accession>Q9NPD8</accession>
<accession>Q2TU36</accession>
<proteinExistence type="evidence at protein level"/>
<comment type="function">
    <text evidence="4 5 6 7 8 9 15">Accepts ubiquitin from the E1 complex and catalyzes its covalent attachment to other proteins. Catalyzes monoubiquitination. Involved in mitomycin-C (MMC)-induced DNA repair. Acts as a specific E2 ubiquitin-conjugating enzyme for the Fanconi anemia complex by associating with E3 ubiquitin-protein ligase FANCL and catalyzing monoubiquitination of FANCD2, a key step in the DNA damage pathway (PubMed:16916645, PubMed:17938197, PubMed:19111657, PubMed:19589784, PubMed:28437106). Also mediates monoubiquitination of FANCL and FANCI (PubMed:16916645, PubMed:17938197, PubMed:19111657, PubMed:19589784). May contribute to ubiquitination and degradation of BRCA1 (PubMed:19887602). In vitro able to promote polyubiquitination using all 7 ubiquitin Lys residues, but may prefer 'Lys-11'-, 'Lys-27'-, 'Lys-48'- and 'Lys-63'-linked polyubiquitination (PubMed:20061386).</text>
</comment>
<comment type="catalytic activity">
    <reaction evidence="1 2 9">
        <text>S-ubiquitinyl-[E1 ubiquitin-activating enzyme]-L-cysteine + [E2 ubiquitin-conjugating enzyme]-L-cysteine = [E1 ubiquitin-activating enzyme]-L-cysteine + S-ubiquitinyl-[E2 ubiquitin-conjugating enzyme]-L-cysteine.</text>
        <dbReference type="EC" id="2.3.2.23"/>
    </reaction>
</comment>
<comment type="pathway">
    <text evidence="1">Protein modification; protein ubiquitination.</text>
</comment>
<comment type="subunit">
    <text evidence="4 5 6 8 11 13">Directly interacts with FANCL (PubMed:16916645, PubMed:17938197, PubMed:19111657, PubMed:21775430, PubMed:24389026). Interacts with BRCA1 (PubMed:19887602).</text>
</comment>
<comment type="interaction">
    <interactant intactId="EBI-2130165">
        <id>Q9NPD8</id>
    </interactant>
    <interactant intactId="EBI-16088720">
        <id>Q9NW38-1</id>
        <label>FANCL</label>
    </interactant>
    <organismsDiffer>false</organismsDiffer>
    <experiments>3</experiments>
</comment>
<comment type="interaction">
    <interactant intactId="EBI-2130165">
        <id>Q9NPD8</id>
    </interactant>
    <interactant intactId="EBI-356942">
        <id>P62879</id>
        <label>GNB2</label>
    </interactant>
    <organismsDiffer>false</organismsDiffer>
    <experiments>3</experiments>
</comment>
<comment type="subcellular location">
    <subcellularLocation>
        <location evidence="5 8">Nucleus</location>
    </subcellularLocation>
    <text>Accumulates to chromatin.</text>
</comment>
<comment type="induction">
    <text evidence="10">Down-regulated following hypoxia. Up-regulated in breast cancers.</text>
</comment>
<comment type="PTM">
    <text evidence="4 6 9 12">Auto-ubiquitinated. Effects of auto-monoubiquitination at Lys-91 and Lys-182 are unclear: according to a report, monoubiquitination inactivates E2 enzyme activity (PubMed:16916645). In contrast, according to another report, autoubiquitination does not affect E2 enzyme activity (PubMed:19111657).</text>
</comment>
<comment type="disease" evidence="14">
    <disease id="DI-04462">
        <name>Fanconi anemia complementation group T</name>
        <acronym>FANCT</acronym>
        <description>A disorder affecting all bone marrow elements and resulting in anemia, leukopenia and thrombopenia. It is associated with cardiac, renal and limb malformations, dermal pigmentary changes, and a predisposition to the development of malignancies. At the cellular level it is associated with hypersensitivity to DNA-damaging agents, chromosomal instability (increased chromosome breakage) and defective DNA repair.</description>
        <dbReference type="MIM" id="616435"/>
    </disease>
    <text>The disease is caused by variants affecting the gene represented in this entry.</text>
</comment>
<comment type="similarity">
    <text evidence="1">Belongs to the ubiquitin-conjugating enzyme family.</text>
</comment>
<keyword id="KW-0002">3D-structure</keyword>
<keyword id="KW-0067">ATP-binding</keyword>
<keyword id="KW-0225">Disease variant</keyword>
<keyword id="KW-0227">DNA damage</keyword>
<keyword id="KW-0234">DNA repair</keyword>
<keyword id="KW-0923">Fanconi anemia</keyword>
<keyword id="KW-1017">Isopeptide bond</keyword>
<keyword id="KW-0547">Nucleotide-binding</keyword>
<keyword id="KW-0539">Nucleus</keyword>
<keyword id="KW-0597">Phosphoprotein</keyword>
<keyword id="KW-1267">Proteomics identification</keyword>
<keyword id="KW-1185">Reference proteome</keyword>
<keyword id="KW-0808">Transferase</keyword>
<keyword id="KW-0832">Ubl conjugation</keyword>
<keyword id="KW-0833">Ubl conjugation pathway</keyword>
<dbReference type="EC" id="2.3.2.23" evidence="9"/>
<dbReference type="EMBL" id="AB032931">
    <property type="protein sequence ID" value="BAA93711.1"/>
    <property type="molecule type" value="mRNA"/>
</dbReference>
<dbReference type="EMBL" id="AF160215">
    <property type="protein sequence ID" value="AAF67016.1"/>
    <property type="molecule type" value="mRNA"/>
</dbReference>
<dbReference type="EMBL" id="AF161499">
    <property type="protein sequence ID" value="AAF29114.1"/>
    <property type="molecule type" value="mRNA"/>
</dbReference>
<dbReference type="EMBL" id="AK000504">
    <property type="protein sequence ID" value="BAA91211.1"/>
    <property type="molecule type" value="mRNA"/>
</dbReference>
<dbReference type="EMBL" id="AY542309">
    <property type="protein sequence ID" value="AAT08178.1"/>
    <property type="molecule type" value="mRNA"/>
</dbReference>
<dbReference type="EMBL" id="AL356953">
    <property type="status" value="NOT_ANNOTATED_CDS"/>
    <property type="molecule type" value="Genomic_DNA"/>
</dbReference>
<dbReference type="EMBL" id="CH471067">
    <property type="protein sequence ID" value="EAW91411.1"/>
    <property type="molecule type" value="Genomic_DNA"/>
</dbReference>
<dbReference type="EMBL" id="BC004152">
    <property type="protein sequence ID" value="AAH04152.1"/>
    <property type="molecule type" value="mRNA"/>
</dbReference>
<dbReference type="EMBL" id="BC019284">
    <property type="protein sequence ID" value="AAH19284.1"/>
    <property type="molecule type" value="mRNA"/>
</dbReference>
<dbReference type="CCDS" id="CCDS1425.1"/>
<dbReference type="RefSeq" id="NP_001297255.1">
    <property type="nucleotide sequence ID" value="NM_001310326.1"/>
</dbReference>
<dbReference type="RefSeq" id="NP_054895.1">
    <property type="nucleotide sequence ID" value="NM_014176.4"/>
</dbReference>
<dbReference type="PDB" id="1YH2">
    <property type="method" value="X-ray"/>
    <property type="resolution" value="2.00 A"/>
    <property type="chains" value="A=1-167"/>
</dbReference>
<dbReference type="PDB" id="4CCG">
    <property type="method" value="X-ray"/>
    <property type="resolution" value="2.40 A"/>
    <property type="chains" value="A/B=1-197"/>
</dbReference>
<dbReference type="PDB" id="5NGZ">
    <property type="method" value="X-ray"/>
    <property type="resolution" value="2.40 A"/>
    <property type="chains" value="A=1-197"/>
</dbReference>
<dbReference type="PDB" id="5OJJ">
    <property type="method" value="X-ray"/>
    <property type="resolution" value="1.85 A"/>
    <property type="chains" value="A/B/C/D/E/F=1-154"/>
</dbReference>
<dbReference type="PDB" id="6R75">
    <property type="method" value="X-ray"/>
    <property type="resolution" value="2.00 A"/>
    <property type="chains" value="A=1-197"/>
</dbReference>
<dbReference type="PDB" id="7KZR">
    <property type="method" value="EM"/>
    <property type="resolution" value="4.20 A"/>
    <property type="chains" value="X=1-197"/>
</dbReference>
<dbReference type="PDB" id="7KZS">
    <property type="method" value="EM"/>
    <property type="resolution" value="4.20 A"/>
    <property type="chains" value="X=1-197"/>
</dbReference>
<dbReference type="PDB" id="7KZT">
    <property type="method" value="EM"/>
    <property type="resolution" value="4.20 A"/>
    <property type="chains" value="X=1-197"/>
</dbReference>
<dbReference type="PDB" id="7KZV">
    <property type="method" value="EM"/>
    <property type="resolution" value="4.20 A"/>
    <property type="chains" value="X=1-197"/>
</dbReference>
<dbReference type="PDB" id="8JUC">
    <property type="method" value="X-ray"/>
    <property type="resolution" value="1.54 A"/>
    <property type="chains" value="A=1-154"/>
</dbReference>
<dbReference type="PDB" id="8JVD">
    <property type="method" value="X-ray"/>
    <property type="resolution" value="1.70 A"/>
    <property type="chains" value="A=1-154"/>
</dbReference>
<dbReference type="PDB" id="8JVE">
    <property type="method" value="X-ray"/>
    <property type="resolution" value="1.76 A"/>
    <property type="chains" value="A=1-154"/>
</dbReference>
<dbReference type="PDB" id="8JVL">
    <property type="method" value="X-ray"/>
    <property type="resolution" value="2.06 A"/>
    <property type="chains" value="A=1-154"/>
</dbReference>
<dbReference type="PDBsum" id="1YH2"/>
<dbReference type="PDBsum" id="4CCG"/>
<dbReference type="PDBsum" id="5NGZ"/>
<dbReference type="PDBsum" id="5OJJ"/>
<dbReference type="PDBsum" id="6R75"/>
<dbReference type="PDBsum" id="7KZR"/>
<dbReference type="PDBsum" id="7KZS"/>
<dbReference type="PDBsum" id="7KZT"/>
<dbReference type="PDBsum" id="7KZV"/>
<dbReference type="PDBsum" id="8JUC"/>
<dbReference type="PDBsum" id="8JVD"/>
<dbReference type="PDBsum" id="8JVE"/>
<dbReference type="PDBsum" id="8JVL"/>
<dbReference type="EMDB" id="EMD-23087"/>
<dbReference type="EMDB" id="EMD-23088"/>
<dbReference type="EMDB" id="EMD-23089"/>
<dbReference type="EMDB" id="EMD-23090"/>
<dbReference type="SMR" id="Q9NPD8"/>
<dbReference type="BioGRID" id="118858">
    <property type="interactions" value="91"/>
</dbReference>
<dbReference type="DIP" id="DIP-52740N"/>
<dbReference type="FunCoup" id="Q9NPD8">
    <property type="interactions" value="1833"/>
</dbReference>
<dbReference type="IntAct" id="Q9NPD8">
    <property type="interactions" value="37"/>
</dbReference>
<dbReference type="MINT" id="Q9NPD8"/>
<dbReference type="STRING" id="9606.ENSP00000494957"/>
<dbReference type="BindingDB" id="Q9NPD8"/>
<dbReference type="ChEMBL" id="CHEMBL4105763"/>
<dbReference type="DrugBank" id="DB16828">
    <property type="generic name" value="MK-2206"/>
</dbReference>
<dbReference type="DrugCentral" id="Q9NPD8"/>
<dbReference type="GlyGen" id="Q9NPD8">
    <property type="glycosylation" value="1 site, 1 O-linked glycan (1 site)"/>
</dbReference>
<dbReference type="iPTMnet" id="Q9NPD8"/>
<dbReference type="PhosphoSitePlus" id="Q9NPD8"/>
<dbReference type="SwissPalm" id="Q9NPD8"/>
<dbReference type="BioMuta" id="UBE2T"/>
<dbReference type="DMDM" id="73622065"/>
<dbReference type="CPTAC" id="CPTAC-3262"/>
<dbReference type="CPTAC" id="CPTAC-3263"/>
<dbReference type="jPOST" id="Q9NPD8"/>
<dbReference type="MassIVE" id="Q9NPD8"/>
<dbReference type="PaxDb" id="9606-ENSP00000356243"/>
<dbReference type="PeptideAtlas" id="Q9NPD8"/>
<dbReference type="ProteomicsDB" id="81976"/>
<dbReference type="Pumba" id="Q9NPD8"/>
<dbReference type="TopDownProteomics" id="Q9NPD8"/>
<dbReference type="Antibodypedia" id="1227">
    <property type="antibodies" value="307 antibodies from 34 providers"/>
</dbReference>
<dbReference type="CPTC" id="Q9NPD8">
    <property type="antibodies" value="1 antibody"/>
</dbReference>
<dbReference type="DNASU" id="29089"/>
<dbReference type="Ensembl" id="ENST00000646651.1">
    <property type="protein sequence ID" value="ENSP00000494957.1"/>
    <property type="gene ID" value="ENSG00000077152.12"/>
</dbReference>
<dbReference type="Ensembl" id="ENST00000699423.1">
    <property type="protein sequence ID" value="ENSP00000514379.1"/>
    <property type="gene ID" value="ENSG00000077152.12"/>
</dbReference>
<dbReference type="GeneID" id="29089"/>
<dbReference type="KEGG" id="hsa:29089"/>
<dbReference type="MANE-Select" id="ENST00000646651.1">
    <property type="protein sequence ID" value="ENSP00000494957.1"/>
    <property type="RefSeq nucleotide sequence ID" value="NM_014176.4"/>
    <property type="RefSeq protein sequence ID" value="NP_054895.1"/>
</dbReference>
<dbReference type="UCSC" id="uc001gxx.5">
    <property type="organism name" value="human"/>
</dbReference>
<dbReference type="AGR" id="HGNC:25009"/>
<dbReference type="CTD" id="29089"/>
<dbReference type="DisGeNET" id="29089"/>
<dbReference type="GeneCards" id="UBE2T"/>
<dbReference type="GeneReviews" id="UBE2T"/>
<dbReference type="HGNC" id="HGNC:25009">
    <property type="gene designation" value="UBE2T"/>
</dbReference>
<dbReference type="HPA" id="ENSG00000077152">
    <property type="expression patterns" value="Tissue enhanced (lymphoid)"/>
</dbReference>
<dbReference type="MalaCards" id="UBE2T"/>
<dbReference type="MIM" id="610538">
    <property type="type" value="gene"/>
</dbReference>
<dbReference type="MIM" id="616435">
    <property type="type" value="phenotype"/>
</dbReference>
<dbReference type="neXtProt" id="NX_Q9NPD8"/>
<dbReference type="OpenTargets" id="ENSG00000077152"/>
<dbReference type="Orphanet" id="84">
    <property type="disease" value="Fanconi anemia"/>
</dbReference>
<dbReference type="PharmGKB" id="PA142670655"/>
<dbReference type="VEuPathDB" id="HostDB:ENSG00000077152"/>
<dbReference type="eggNOG" id="KOG0417">
    <property type="taxonomic scope" value="Eukaryota"/>
</dbReference>
<dbReference type="GeneTree" id="ENSGT00940000157365"/>
<dbReference type="HOGENOM" id="CLU_030988_13_2_1"/>
<dbReference type="InParanoid" id="Q9NPD8"/>
<dbReference type="OMA" id="GVEKKFC"/>
<dbReference type="OrthoDB" id="9978460at2759"/>
<dbReference type="PAN-GO" id="Q9NPD8">
    <property type="GO annotations" value="4 GO annotations based on evolutionary models"/>
</dbReference>
<dbReference type="PhylomeDB" id="Q9NPD8"/>
<dbReference type="TreeFam" id="TF354203"/>
<dbReference type="BRENDA" id="2.3.2.23">
    <property type="organism ID" value="2681"/>
</dbReference>
<dbReference type="BRENDA" id="2.3.2.24">
    <property type="organism ID" value="2681"/>
</dbReference>
<dbReference type="PathwayCommons" id="Q9NPD8"/>
<dbReference type="Reactome" id="R-HSA-6783310">
    <property type="pathway name" value="Fanconi Anemia Pathway"/>
</dbReference>
<dbReference type="Reactome" id="R-HSA-8866652">
    <property type="pathway name" value="Synthesis of active ubiquitin: roles of E1 and E2 enzymes"/>
</dbReference>
<dbReference type="SignaLink" id="Q9NPD8"/>
<dbReference type="SIGNOR" id="Q9NPD8"/>
<dbReference type="UniPathway" id="UPA00143"/>
<dbReference type="BioGRID-ORCS" id="29089">
    <property type="hits" value="94 hits in 1169 CRISPR screens"/>
</dbReference>
<dbReference type="ChiTaRS" id="UBE2T">
    <property type="organism name" value="human"/>
</dbReference>
<dbReference type="EvolutionaryTrace" id="Q9NPD8"/>
<dbReference type="GenomeRNAi" id="29089"/>
<dbReference type="Pharos" id="Q9NPD8">
    <property type="development level" value="Tbio"/>
</dbReference>
<dbReference type="PRO" id="PR:Q9NPD8"/>
<dbReference type="Proteomes" id="UP000005640">
    <property type="component" value="Chromosome 1"/>
</dbReference>
<dbReference type="RNAct" id="Q9NPD8">
    <property type="molecule type" value="protein"/>
</dbReference>
<dbReference type="Bgee" id="ENSG00000077152">
    <property type="expression patterns" value="Expressed in oocyte and 156 other cell types or tissues"/>
</dbReference>
<dbReference type="ExpressionAtlas" id="Q9NPD8">
    <property type="expression patterns" value="baseline and differential"/>
</dbReference>
<dbReference type="GO" id="GO:0005730">
    <property type="term" value="C:nucleolus"/>
    <property type="evidence" value="ECO:0000314"/>
    <property type="project" value="HPA"/>
</dbReference>
<dbReference type="GO" id="GO:0005654">
    <property type="term" value="C:nucleoplasm"/>
    <property type="evidence" value="ECO:0000314"/>
    <property type="project" value="HPA"/>
</dbReference>
<dbReference type="GO" id="GO:0005634">
    <property type="term" value="C:nucleus"/>
    <property type="evidence" value="ECO:0000318"/>
    <property type="project" value="GO_Central"/>
</dbReference>
<dbReference type="GO" id="GO:0005524">
    <property type="term" value="F:ATP binding"/>
    <property type="evidence" value="ECO:0007669"/>
    <property type="project" value="UniProtKB-KW"/>
</dbReference>
<dbReference type="GO" id="GO:0003682">
    <property type="term" value="F:chromatin binding"/>
    <property type="evidence" value="ECO:0000314"/>
    <property type="project" value="UniProtKB"/>
</dbReference>
<dbReference type="GO" id="GO:0061631">
    <property type="term" value="F:ubiquitin conjugating enzyme activity"/>
    <property type="evidence" value="ECO:0000314"/>
    <property type="project" value="MGI"/>
</dbReference>
<dbReference type="GO" id="GO:0031625">
    <property type="term" value="F:ubiquitin protein ligase binding"/>
    <property type="evidence" value="ECO:0000353"/>
    <property type="project" value="UniProtKB"/>
</dbReference>
<dbReference type="GO" id="GO:0004842">
    <property type="term" value="F:ubiquitin-protein transferase activity"/>
    <property type="evidence" value="ECO:0000314"/>
    <property type="project" value="UniProtKB"/>
</dbReference>
<dbReference type="GO" id="GO:0006974">
    <property type="term" value="P:DNA damage response"/>
    <property type="evidence" value="ECO:0000315"/>
    <property type="project" value="UniProtKB"/>
</dbReference>
<dbReference type="GO" id="GO:0006281">
    <property type="term" value="P:DNA repair"/>
    <property type="evidence" value="ECO:0000315"/>
    <property type="project" value="UniProtKB"/>
</dbReference>
<dbReference type="GO" id="GO:0051865">
    <property type="term" value="P:protein autoubiquitination"/>
    <property type="evidence" value="ECO:0000314"/>
    <property type="project" value="UniProtKB"/>
</dbReference>
<dbReference type="GO" id="GO:0070979">
    <property type="term" value="P:protein K11-linked ubiquitination"/>
    <property type="evidence" value="ECO:0000314"/>
    <property type="project" value="UniProtKB"/>
</dbReference>
<dbReference type="GO" id="GO:0044314">
    <property type="term" value="P:protein K27-linked ubiquitination"/>
    <property type="evidence" value="ECO:0000314"/>
    <property type="project" value="UniProtKB"/>
</dbReference>
<dbReference type="GO" id="GO:0035519">
    <property type="term" value="P:protein K29-linked ubiquitination"/>
    <property type="evidence" value="ECO:0000314"/>
    <property type="project" value="UniProtKB"/>
</dbReference>
<dbReference type="GO" id="GO:0070936">
    <property type="term" value="P:protein K48-linked ubiquitination"/>
    <property type="evidence" value="ECO:0000314"/>
    <property type="project" value="UniProtKB"/>
</dbReference>
<dbReference type="GO" id="GO:0085020">
    <property type="term" value="P:protein K6-linked ubiquitination"/>
    <property type="evidence" value="ECO:0000314"/>
    <property type="project" value="UniProtKB"/>
</dbReference>
<dbReference type="GO" id="GO:0070534">
    <property type="term" value="P:protein K63-linked ubiquitination"/>
    <property type="evidence" value="ECO:0000314"/>
    <property type="project" value="UniProtKB"/>
</dbReference>
<dbReference type="GO" id="GO:0006513">
    <property type="term" value="P:protein monoubiquitination"/>
    <property type="evidence" value="ECO:0000314"/>
    <property type="project" value="UniProtKB"/>
</dbReference>
<dbReference type="GO" id="GO:0000209">
    <property type="term" value="P:protein polyubiquitination"/>
    <property type="evidence" value="ECO:0000318"/>
    <property type="project" value="GO_Central"/>
</dbReference>
<dbReference type="CDD" id="cd23805">
    <property type="entry name" value="UBCc_UBE2T"/>
    <property type="match status" value="1"/>
</dbReference>
<dbReference type="FunFam" id="3.10.110.10:FF:000041">
    <property type="entry name" value="Ubiquitin-conjugating enzyme E2 T"/>
    <property type="match status" value="1"/>
</dbReference>
<dbReference type="Gene3D" id="3.10.110.10">
    <property type="entry name" value="Ubiquitin Conjugating Enzyme"/>
    <property type="match status" value="1"/>
</dbReference>
<dbReference type="InterPro" id="IPR050113">
    <property type="entry name" value="Ub_conjugating_enzyme"/>
</dbReference>
<dbReference type="InterPro" id="IPR000608">
    <property type="entry name" value="UBQ-conjugat_E2_core"/>
</dbReference>
<dbReference type="InterPro" id="IPR023313">
    <property type="entry name" value="UBQ-conjugating_AS"/>
</dbReference>
<dbReference type="InterPro" id="IPR016135">
    <property type="entry name" value="UBQ-conjugating_enzyme/RWD"/>
</dbReference>
<dbReference type="PANTHER" id="PTHR24067">
    <property type="entry name" value="UBIQUITIN-CONJUGATING ENZYME E2"/>
    <property type="match status" value="1"/>
</dbReference>
<dbReference type="Pfam" id="PF00179">
    <property type="entry name" value="UQ_con"/>
    <property type="match status" value="1"/>
</dbReference>
<dbReference type="SMART" id="SM00212">
    <property type="entry name" value="UBCc"/>
    <property type="match status" value="1"/>
</dbReference>
<dbReference type="SUPFAM" id="SSF54495">
    <property type="entry name" value="UBC-like"/>
    <property type="match status" value="1"/>
</dbReference>
<dbReference type="PROSITE" id="PS00183">
    <property type="entry name" value="UBC_1"/>
    <property type="match status" value="1"/>
</dbReference>
<dbReference type="PROSITE" id="PS50127">
    <property type="entry name" value="UBC_2"/>
    <property type="match status" value="1"/>
</dbReference>
<name>UBE2T_HUMAN</name>
<organism>
    <name type="scientific">Homo sapiens</name>
    <name type="common">Human</name>
    <dbReference type="NCBI Taxonomy" id="9606"/>
    <lineage>
        <taxon>Eukaryota</taxon>
        <taxon>Metazoa</taxon>
        <taxon>Chordata</taxon>
        <taxon>Craniata</taxon>
        <taxon>Vertebrata</taxon>
        <taxon>Euteleostomi</taxon>
        <taxon>Mammalia</taxon>
        <taxon>Eutheria</taxon>
        <taxon>Euarchontoglires</taxon>
        <taxon>Primates</taxon>
        <taxon>Haplorrhini</taxon>
        <taxon>Catarrhini</taxon>
        <taxon>Hominidae</taxon>
        <taxon>Homo</taxon>
    </lineage>
</organism>
<feature type="chain" id="PRO_0000082509" description="Ubiquitin-conjugating enzyme E2 T">
    <location>
        <begin position="1"/>
        <end position="197"/>
    </location>
</feature>
<feature type="domain" description="UBC core" evidence="1">
    <location>
        <begin position="2"/>
        <end position="152"/>
    </location>
</feature>
<feature type="region of interest" description="Disordered" evidence="3">
    <location>
        <begin position="149"/>
        <end position="197"/>
    </location>
</feature>
<feature type="active site" description="Glycyl thioester intermediate" evidence="1">
    <location>
        <position position="86"/>
    </location>
</feature>
<feature type="modified residue" description="Phosphoserine" evidence="19">
    <location>
        <position position="184"/>
    </location>
</feature>
<feature type="cross-link" description="Glycyl lysine isopeptide (Lys-Gly) (interchain with G-Cter in ubiquitin)" evidence="4 6">
    <location>
        <position position="91"/>
    </location>
</feature>
<feature type="cross-link" description="Glycyl lysine isopeptide (Lys-Gly) (interchain with G-Cter in ubiquitin)" evidence="6">
    <location>
        <position position="182"/>
    </location>
</feature>
<feature type="cross-link" description="Glycyl lysine isopeptide (Lys-Gly) (interchain with G-Cter in SUMO2)" evidence="20">
    <location>
        <position position="191"/>
    </location>
</feature>
<feature type="cross-link" description="Glycyl lysine isopeptide (Lys-Gly) (interchain with G-Cter in SUMO2)" evidence="20">
    <location>
        <position position="192"/>
    </location>
</feature>
<feature type="sequence variant" id="VAR_073861" description="In FANCT; abolishes FANCD2 monoubiquitination; abolishes interaction with FANCL; dbSNP:rs774357609." evidence="14">
    <original>Q</original>
    <variation>E</variation>
    <location>
        <position position="2"/>
    </location>
</feature>
<feature type="mutagenesis site" description="No effect on FANCL-binding, nor on FANCL-dependent monoubiquitination of FANCD2." evidence="13">
    <original>S</original>
    <variation>R</variation>
    <location>
        <position position="5"/>
    </location>
</feature>
<feature type="mutagenesis site" description="Loss of FANCL-binding and of FANCL-dependent monoubiquitination of FANCD2." evidence="13">
    <original>R</original>
    <variation>E</variation>
    <location>
        <position position="60"/>
    </location>
</feature>
<feature type="mutagenesis site" description="Decreased binding to FANCL." evidence="11">
    <original>F</original>
    <variation>A</variation>
    <location>
        <position position="63"/>
    </location>
</feature>
<feature type="mutagenesis site" description="Decreased FANCD2 ubiquitination." evidence="15">
    <original>P</original>
    <variation>K</variation>
    <location>
        <position position="73"/>
    </location>
</feature>
<feature type="mutagenesis site" description="Loss of E2 enzyme activity." evidence="4 5 6 7 8">
    <original>C</original>
    <variation>A</variation>
    <location>
        <position position="86"/>
    </location>
</feature>
<feature type="mutagenesis site" description="Decreased monoubiquitination." evidence="6">
    <original>K</original>
    <variation>R</variation>
    <location>
        <position position="91"/>
    </location>
</feature>
<feature type="mutagenesis site" description="No effect on FANCL-binding, nor on FANCL-dependent monoubiquitination of FANCD2." evidence="13">
    <original>RPS</original>
    <variation>SPR</variation>
    <location>
        <begin position="99"/>
        <end position="101"/>
    </location>
</feature>
<feature type="mutagenesis site" description="Decreased monoubiquitination." evidence="6">
    <location>
        <begin position="182"/>
        <end position="191"/>
    </location>
</feature>
<feature type="helix" evidence="21">
    <location>
        <begin position="6"/>
        <end position="16"/>
    </location>
</feature>
<feature type="strand" evidence="21">
    <location>
        <begin position="22"/>
        <end position="26"/>
    </location>
</feature>
<feature type="strand" evidence="21">
    <location>
        <begin position="30"/>
        <end position="39"/>
    </location>
</feature>
<feature type="turn" evidence="21">
    <location>
        <begin position="45"/>
        <end position="48"/>
    </location>
</feature>
<feature type="strand" evidence="21">
    <location>
        <begin position="49"/>
        <end position="57"/>
    </location>
</feature>
<feature type="turn" evidence="21">
    <location>
        <begin position="59"/>
        <end position="62"/>
    </location>
</feature>
<feature type="strand" evidence="21">
    <location>
        <begin position="67"/>
        <end position="72"/>
    </location>
</feature>
<feature type="helix" evidence="21">
    <location>
        <begin position="88"/>
        <end position="90"/>
    </location>
</feature>
<feature type="turn" evidence="21">
    <location>
        <begin position="93"/>
        <end position="95"/>
    </location>
</feature>
<feature type="helix" evidence="21">
    <location>
        <begin position="104"/>
        <end position="116"/>
    </location>
</feature>
<feature type="helix" evidence="21">
    <location>
        <begin position="126"/>
        <end position="134"/>
    </location>
</feature>
<feature type="helix" evidence="21">
    <location>
        <begin position="136"/>
        <end position="150"/>
    </location>
</feature>
<feature type="strand" evidence="21">
    <location>
        <begin position="151"/>
        <end position="153"/>
    </location>
</feature>
<evidence type="ECO:0000255" key="1">
    <source>
        <dbReference type="PROSITE-ProRule" id="PRU00388"/>
    </source>
</evidence>
<evidence type="ECO:0000255" key="2">
    <source>
        <dbReference type="PROSITE-ProRule" id="PRU10133"/>
    </source>
</evidence>
<evidence type="ECO:0000256" key="3">
    <source>
        <dbReference type="SAM" id="MobiDB-lite"/>
    </source>
</evidence>
<evidence type="ECO:0000269" key="4">
    <source>
    </source>
</evidence>
<evidence type="ECO:0000269" key="5">
    <source>
    </source>
</evidence>
<evidence type="ECO:0000269" key="6">
    <source>
    </source>
</evidence>
<evidence type="ECO:0000269" key="7">
    <source>
    </source>
</evidence>
<evidence type="ECO:0000269" key="8">
    <source>
    </source>
</evidence>
<evidence type="ECO:0000269" key="9">
    <source>
    </source>
</evidence>
<evidence type="ECO:0000269" key="10">
    <source>
    </source>
</evidence>
<evidence type="ECO:0000269" key="11">
    <source>
    </source>
</evidence>
<evidence type="ECO:0000269" key="12">
    <source>
    </source>
</evidence>
<evidence type="ECO:0000269" key="13">
    <source>
    </source>
</evidence>
<evidence type="ECO:0000269" key="14">
    <source>
    </source>
</evidence>
<evidence type="ECO:0000269" key="15">
    <source>
    </source>
</evidence>
<evidence type="ECO:0007744" key="16">
    <source>
        <dbReference type="PDB" id="1YH2"/>
    </source>
</evidence>
<evidence type="ECO:0007744" key="17">
    <source>
        <dbReference type="PDB" id="4CCG"/>
    </source>
</evidence>
<evidence type="ECO:0007744" key="18">
    <source>
        <dbReference type="PDB" id="5NGZ"/>
    </source>
</evidence>
<evidence type="ECO:0007744" key="19">
    <source>
    </source>
</evidence>
<evidence type="ECO:0007744" key="20">
    <source>
    </source>
</evidence>
<evidence type="ECO:0007829" key="21">
    <source>
        <dbReference type="PDB" id="5OJJ"/>
    </source>
</evidence>